<keyword id="KW-1185">Reference proteome</keyword>
<reference key="1">
    <citation type="journal article" date="1998" name="Nature">
        <title>The genome sequence of Rickettsia prowazekii and the origin of mitochondria.</title>
        <authorList>
            <person name="Andersson S.G.E."/>
            <person name="Zomorodipour A."/>
            <person name="Andersson J.O."/>
            <person name="Sicheritz-Ponten T."/>
            <person name="Alsmark U.C.M."/>
            <person name="Podowski R.M."/>
            <person name="Naeslund A.K."/>
            <person name="Eriksson A.-S."/>
            <person name="Winkler H.H."/>
            <person name="Kurland C.G."/>
        </authorList>
    </citation>
    <scope>NUCLEOTIDE SEQUENCE [LARGE SCALE GENOMIC DNA]</scope>
    <source>
        <strain>Madrid E</strain>
    </source>
</reference>
<comment type="similarity">
    <text evidence="1">Belongs to the SCO1/2 family.</text>
</comment>
<gene>
    <name type="ordered locus">RP031</name>
</gene>
<proteinExistence type="inferred from homology"/>
<protein>
    <recommendedName>
        <fullName>SCO2-like protein RP031</fullName>
    </recommendedName>
</protein>
<dbReference type="EMBL" id="AJ235270">
    <property type="protein sequence ID" value="CAA14502.1"/>
    <property type="molecule type" value="Genomic_DNA"/>
</dbReference>
<dbReference type="PIR" id="G71710">
    <property type="entry name" value="G71710"/>
</dbReference>
<dbReference type="RefSeq" id="NP_220425.1">
    <property type="nucleotide sequence ID" value="NC_000963.1"/>
</dbReference>
<dbReference type="RefSeq" id="WP_010886196.1">
    <property type="nucleotide sequence ID" value="NC_000963.1"/>
</dbReference>
<dbReference type="SMR" id="Q9ZEB4"/>
<dbReference type="STRING" id="272947.gene:17555114"/>
<dbReference type="EnsemblBacteria" id="CAA14502">
    <property type="protein sequence ID" value="CAA14502"/>
    <property type="gene ID" value="CAA14502"/>
</dbReference>
<dbReference type="KEGG" id="rpr:RP031"/>
<dbReference type="PATRIC" id="fig|272947.5.peg.32"/>
<dbReference type="eggNOG" id="COG1999">
    <property type="taxonomic scope" value="Bacteria"/>
</dbReference>
<dbReference type="HOGENOM" id="CLU_050131_6_0_5"/>
<dbReference type="OrthoDB" id="9790194at2"/>
<dbReference type="Proteomes" id="UP000002480">
    <property type="component" value="Chromosome"/>
</dbReference>
<dbReference type="CDD" id="cd02968">
    <property type="entry name" value="SCO"/>
    <property type="match status" value="1"/>
</dbReference>
<dbReference type="Gene3D" id="3.40.30.10">
    <property type="entry name" value="Glutaredoxin"/>
    <property type="match status" value="1"/>
</dbReference>
<dbReference type="InterPro" id="IPR003782">
    <property type="entry name" value="SCO1/SenC"/>
</dbReference>
<dbReference type="InterPro" id="IPR036249">
    <property type="entry name" value="Thioredoxin-like_sf"/>
</dbReference>
<dbReference type="PANTHER" id="PTHR12151">
    <property type="entry name" value="ELECTRON TRANSPORT PROTIN SCO1/SENC FAMILY MEMBER"/>
    <property type="match status" value="1"/>
</dbReference>
<dbReference type="PANTHER" id="PTHR12151:SF25">
    <property type="entry name" value="LINALOOL DEHYDRATASE_ISOMERASE DOMAIN-CONTAINING PROTEIN"/>
    <property type="match status" value="1"/>
</dbReference>
<dbReference type="Pfam" id="PF02630">
    <property type="entry name" value="SCO1-SenC"/>
    <property type="match status" value="1"/>
</dbReference>
<dbReference type="SUPFAM" id="SSF52833">
    <property type="entry name" value="Thioredoxin-like"/>
    <property type="match status" value="1"/>
</dbReference>
<evidence type="ECO:0000305" key="1"/>
<accession>Q9ZEB4</accession>
<organism>
    <name type="scientific">Rickettsia prowazekii (strain Madrid E)</name>
    <dbReference type="NCBI Taxonomy" id="272947"/>
    <lineage>
        <taxon>Bacteria</taxon>
        <taxon>Pseudomonadati</taxon>
        <taxon>Pseudomonadota</taxon>
        <taxon>Alphaproteobacteria</taxon>
        <taxon>Rickettsiales</taxon>
        <taxon>Rickettsiaceae</taxon>
        <taxon>Rickettsieae</taxon>
        <taxon>Rickettsia</taxon>
        <taxon>typhus group</taxon>
    </lineage>
</organism>
<name>SCO21_RICPR</name>
<sequence length="191" mass="22254">MRNNKNQMYIIKIFIAIAMITGIIFLYLFYSSLTTSKLKETSNMDDSLKIKFTLIEQQGKKFDSTNLQGYLSLIYFGTTYSLYDNQALKRVEDIIKILKRENILLQVVFITLDPEHDTSEVLKKYLEKIDSNFIGLTGRVQDIEQLAQQFKVFYTSKIFDVKTNEYALQHSNFVYLISSDGKILSHYYLGS</sequence>
<feature type="chain" id="PRO_0000173878" description="SCO2-like protein RP031">
    <location>
        <begin position="1"/>
        <end position="191"/>
    </location>
</feature>